<keyword id="KW-0040">ANK repeat</keyword>
<keyword id="KW-0966">Cell projection</keyword>
<keyword id="KW-0963">Cytoplasm</keyword>
<keyword id="KW-0206">Cytoskeleton</keyword>
<keyword id="KW-0479">Metal-binding</keyword>
<keyword id="KW-0597">Phosphoprotein</keyword>
<keyword id="KW-1185">Reference proteome</keyword>
<keyword id="KW-0677">Repeat</keyword>
<keyword id="KW-0862">Zinc</keyword>
<keyword id="KW-0863">Zinc-finger</keyword>
<evidence type="ECO:0000250" key="1">
    <source>
        <dbReference type="UniProtKB" id="Q9NVP4"/>
    </source>
</evidence>
<evidence type="ECO:0000255" key="2"/>
<evidence type="ECO:0000256" key="3">
    <source>
        <dbReference type="SAM" id="MobiDB-lite"/>
    </source>
</evidence>
<evidence type="ECO:0000269" key="4">
    <source>
    </source>
</evidence>
<organism>
    <name type="scientific">Danio rerio</name>
    <name type="common">Zebrafish</name>
    <name type="synonym">Brachydanio rerio</name>
    <dbReference type="NCBI Taxonomy" id="7955"/>
    <lineage>
        <taxon>Eukaryota</taxon>
        <taxon>Metazoa</taxon>
        <taxon>Chordata</taxon>
        <taxon>Craniata</taxon>
        <taxon>Vertebrata</taxon>
        <taxon>Euteleostomi</taxon>
        <taxon>Actinopterygii</taxon>
        <taxon>Neopterygii</taxon>
        <taxon>Teleostei</taxon>
        <taxon>Ostariophysi</taxon>
        <taxon>Cypriniformes</taxon>
        <taxon>Danionidae</taxon>
        <taxon>Danioninae</taxon>
        <taxon>Danio</taxon>
    </lineage>
</organism>
<gene>
    <name type="primary">dzank1</name>
    <name type="ORF">wu:fj19d07</name>
    <name type="ORF">zgc:123116</name>
</gene>
<reference key="1">
    <citation type="journal article" date="2004" name="Proc. Natl. Acad. Sci. U.S.A.">
        <title>Hematopoietic gene expression profile in zebrafish kidney marrow.</title>
        <authorList>
            <person name="Song H.-D."/>
            <person name="Sun X.-J."/>
            <person name="Deng M."/>
            <person name="Zhang G.-W."/>
            <person name="Zhou Y."/>
            <person name="Wu X.-Y."/>
            <person name="Sheng Y."/>
            <person name="Chen Y."/>
            <person name="Ruan Z."/>
            <person name="Jiang C.-L."/>
            <person name="Fan H.-Y."/>
            <person name="Zon L.I."/>
            <person name="Kanki J.P."/>
            <person name="Liu T.X."/>
            <person name="Look A.T."/>
            <person name="Chen Z."/>
        </authorList>
    </citation>
    <scope>NUCLEOTIDE SEQUENCE [LARGE SCALE MRNA]</scope>
    <source>
        <strain>Tuebingen</strain>
    </source>
</reference>
<reference key="2">
    <citation type="journal article" date="2013" name="Nature">
        <title>The zebrafish reference genome sequence and its relationship to the human genome.</title>
        <authorList>
            <person name="Howe K."/>
            <person name="Clark M.D."/>
            <person name="Torroja C.F."/>
            <person name="Torrance J."/>
            <person name="Berthelot C."/>
            <person name="Muffato M."/>
            <person name="Collins J.E."/>
            <person name="Humphray S."/>
            <person name="McLaren K."/>
            <person name="Matthews L."/>
            <person name="McLaren S."/>
            <person name="Sealy I."/>
            <person name="Caccamo M."/>
            <person name="Churcher C."/>
            <person name="Scott C."/>
            <person name="Barrett J.C."/>
            <person name="Koch R."/>
            <person name="Rauch G.J."/>
            <person name="White S."/>
            <person name="Chow W."/>
            <person name="Kilian B."/>
            <person name="Quintais L.T."/>
            <person name="Guerra-Assuncao J.A."/>
            <person name="Zhou Y."/>
            <person name="Gu Y."/>
            <person name="Yen J."/>
            <person name="Vogel J.H."/>
            <person name="Eyre T."/>
            <person name="Redmond S."/>
            <person name="Banerjee R."/>
            <person name="Chi J."/>
            <person name="Fu B."/>
            <person name="Langley E."/>
            <person name="Maguire S.F."/>
            <person name="Laird G.K."/>
            <person name="Lloyd D."/>
            <person name="Kenyon E."/>
            <person name="Donaldson S."/>
            <person name="Sehra H."/>
            <person name="Almeida-King J."/>
            <person name="Loveland J."/>
            <person name="Trevanion S."/>
            <person name="Jones M."/>
            <person name="Quail M."/>
            <person name="Willey D."/>
            <person name="Hunt A."/>
            <person name="Burton J."/>
            <person name="Sims S."/>
            <person name="McLay K."/>
            <person name="Plumb B."/>
            <person name="Davis J."/>
            <person name="Clee C."/>
            <person name="Oliver K."/>
            <person name="Clark R."/>
            <person name="Riddle C."/>
            <person name="Elliot D."/>
            <person name="Threadgold G."/>
            <person name="Harden G."/>
            <person name="Ware D."/>
            <person name="Begum S."/>
            <person name="Mortimore B."/>
            <person name="Kerry G."/>
            <person name="Heath P."/>
            <person name="Phillimore B."/>
            <person name="Tracey A."/>
            <person name="Corby N."/>
            <person name="Dunn M."/>
            <person name="Johnson C."/>
            <person name="Wood J."/>
            <person name="Clark S."/>
            <person name="Pelan S."/>
            <person name="Griffiths G."/>
            <person name="Smith M."/>
            <person name="Glithero R."/>
            <person name="Howden P."/>
            <person name="Barker N."/>
            <person name="Lloyd C."/>
            <person name="Stevens C."/>
            <person name="Harley J."/>
            <person name="Holt K."/>
            <person name="Panagiotidis G."/>
            <person name="Lovell J."/>
            <person name="Beasley H."/>
            <person name="Henderson C."/>
            <person name="Gordon D."/>
            <person name="Auger K."/>
            <person name="Wright D."/>
            <person name="Collins J."/>
            <person name="Raisen C."/>
            <person name="Dyer L."/>
            <person name="Leung K."/>
            <person name="Robertson L."/>
            <person name="Ambridge K."/>
            <person name="Leongamornlert D."/>
            <person name="McGuire S."/>
            <person name="Gilderthorp R."/>
            <person name="Griffiths C."/>
            <person name="Manthravadi D."/>
            <person name="Nichol S."/>
            <person name="Barker G."/>
            <person name="Whitehead S."/>
            <person name="Kay M."/>
            <person name="Brown J."/>
            <person name="Murnane C."/>
            <person name="Gray E."/>
            <person name="Humphries M."/>
            <person name="Sycamore N."/>
            <person name="Barker D."/>
            <person name="Saunders D."/>
            <person name="Wallis J."/>
            <person name="Babbage A."/>
            <person name="Hammond S."/>
            <person name="Mashreghi-Mohammadi M."/>
            <person name="Barr L."/>
            <person name="Martin S."/>
            <person name="Wray P."/>
            <person name="Ellington A."/>
            <person name="Matthews N."/>
            <person name="Ellwood M."/>
            <person name="Woodmansey R."/>
            <person name="Clark G."/>
            <person name="Cooper J."/>
            <person name="Tromans A."/>
            <person name="Grafham D."/>
            <person name="Skuce C."/>
            <person name="Pandian R."/>
            <person name="Andrews R."/>
            <person name="Harrison E."/>
            <person name="Kimberley A."/>
            <person name="Garnett J."/>
            <person name="Fosker N."/>
            <person name="Hall R."/>
            <person name="Garner P."/>
            <person name="Kelly D."/>
            <person name="Bird C."/>
            <person name="Palmer S."/>
            <person name="Gehring I."/>
            <person name="Berger A."/>
            <person name="Dooley C.M."/>
            <person name="Ersan-Urun Z."/>
            <person name="Eser C."/>
            <person name="Geiger H."/>
            <person name="Geisler M."/>
            <person name="Karotki L."/>
            <person name="Kirn A."/>
            <person name="Konantz J."/>
            <person name="Konantz M."/>
            <person name="Oberlander M."/>
            <person name="Rudolph-Geiger S."/>
            <person name="Teucke M."/>
            <person name="Lanz C."/>
            <person name="Raddatz G."/>
            <person name="Osoegawa K."/>
            <person name="Zhu B."/>
            <person name="Rapp A."/>
            <person name="Widaa S."/>
            <person name="Langford C."/>
            <person name="Yang F."/>
            <person name="Schuster S.C."/>
            <person name="Carter N.P."/>
            <person name="Harrow J."/>
            <person name="Ning Z."/>
            <person name="Herrero J."/>
            <person name="Searle S.M."/>
            <person name="Enright A."/>
            <person name="Geisler R."/>
            <person name="Plasterk R.H."/>
            <person name="Lee C."/>
            <person name="Westerfield M."/>
            <person name="de Jong P.J."/>
            <person name="Zon L.I."/>
            <person name="Postlethwait J.H."/>
            <person name="Nusslein-Volhard C."/>
            <person name="Hubbard T.J."/>
            <person name="Roest Crollius H."/>
            <person name="Rogers J."/>
            <person name="Stemple D.L."/>
        </authorList>
    </citation>
    <scope>NUCLEOTIDE SEQUENCE [LARGE SCALE GENOMIC DNA]</scope>
    <source>
        <strain>Tuebingen</strain>
    </source>
</reference>
<reference key="3">
    <citation type="journal article" date="2015" name="PLoS Genet.">
        <title>NINL and DZANK1 Co-function in Vesicle Transport and Are Essential for Photoreceptor Development in Zebrafish.</title>
        <authorList>
            <person name="Dona M."/>
            <person name="Bachmann-Gagescu R."/>
            <person name="Texier Y."/>
            <person name="Toedt G."/>
            <person name="Hetterschijt L."/>
            <person name="Tonnaer E.L."/>
            <person name="Peters T.A."/>
            <person name="van Beersum S.E."/>
            <person name="Bergboer J.G."/>
            <person name="Horn N."/>
            <person name="de Vrieze E."/>
            <person name="Slijkerman R.W."/>
            <person name="van Reeuwijk J."/>
            <person name="Flik G."/>
            <person name="Keunen J.E."/>
            <person name="Ueffing M."/>
            <person name="Gibson T.J."/>
            <person name="Roepman R."/>
            <person name="Boldt K."/>
            <person name="Kremer H."/>
            <person name="van Wijk E."/>
        </authorList>
    </citation>
    <scope>DISRUPTION PHENOTYPE</scope>
    <scope>FUNCTION</scope>
    <source>
        <strain>Tuebingen</strain>
    </source>
</reference>
<protein>
    <recommendedName>
        <fullName>Double zinc ribbon and ankyrin repeat-containing protein 1</fullName>
    </recommendedName>
</protein>
<name>DZAN1_DANRE</name>
<sequence>MTAGSVAAPQIIPIRIPPPGKAKHEIDSSTPVEIKSESPDVRVLYTLDGSKPELTKRPGFADSTLKYTEPVRLPVGKVYVKAMAISIDGRQSAVVTKVFVVEPSASDERELNAHDEDDSVKNDTAIDGKDVVENGTGVSSVKYLDISSNEAHRALKGPRFLSQRLGPGSSARLTAQNSQNQSADVVESPLKNLTNTQISRIQRETDFLRCPKCLSHRPSDPFARFCLHCGAPVPPIPGQRLPPTEGGQMGLCMHCKTMVPLNTAICVVCESPLDQQLQPQATLRLQDKFICHSCGTGNPAHITHCVTCESQLLRQARPVLSGQRAAPVPSSQGKMVSCSKCNRVNHSDARFCDWCGAKPGHKASSVKCSQCGASSHPYANHCGGCGVFLDGPPRMPLQVNQRQDAEEMQQTASAAELATAPPSVGLRMCADAQTQTVGLFFPSNTELKKRSQQREAELSRQEQMRDRKPLLTAISPGRGFWRKQLDHICAHLRSYTQNNTEFRALIGEPRLGRMISAVIQEDSYEVSLRINFISAPPEESRSSSAGQRSRSVTSESQNLSSVTEGRNSASPENNINTTGSEVKKKKKKKIGTSDVTENQPESKDSLLLKEVGPEGRGRIPAVQQLLDEGADPACLGKDGRPALVAAVLNGHHDVIPVLVQREADVNQASGPLKNTALHEAAALGDEGLKSVEILLGCNASIRKQNDRGQTPYDIAVAAGSSSVLSLMAAHLGQGLLLRHTKARSLSGLDTFS</sequence>
<accession>Q1LXR6</accession>
<accession>A0A8M1N9L8</accession>
<dbReference type="EMBL" id="AY394973">
    <property type="protein sequence ID" value="AAQ94600.1"/>
    <property type="molecule type" value="mRNA"/>
</dbReference>
<dbReference type="EMBL" id="BX294165">
    <property type="status" value="NOT_ANNOTATED_CDS"/>
    <property type="molecule type" value="Genomic_DNA"/>
</dbReference>
<dbReference type="RefSeq" id="NP_001038395.1">
    <property type="nucleotide sequence ID" value="NM_001044930.1"/>
</dbReference>
<dbReference type="RefSeq" id="XP_009294659.1">
    <property type="nucleotide sequence ID" value="XM_009296384.2"/>
</dbReference>
<dbReference type="SMR" id="Q1LXR6"/>
<dbReference type="FunCoup" id="Q1LXR6">
    <property type="interactions" value="787"/>
</dbReference>
<dbReference type="STRING" id="7955.ENSDARP00000072635"/>
<dbReference type="PaxDb" id="7955-ENSDARP00000072635"/>
<dbReference type="Ensembl" id="ENSDART00000078173">
    <property type="protein sequence ID" value="ENSDARP00000072635"/>
    <property type="gene ID" value="ENSDARG00000055787"/>
</dbReference>
<dbReference type="GeneID" id="407652"/>
<dbReference type="KEGG" id="dre:407652"/>
<dbReference type="AGR" id="ZFIN:ZDB-GENE-051113-296"/>
<dbReference type="CTD" id="55184"/>
<dbReference type="ZFIN" id="ZDB-GENE-051113-296">
    <property type="gene designation" value="dzank1"/>
</dbReference>
<dbReference type="eggNOG" id="ENOG502QTJR">
    <property type="taxonomic scope" value="Eukaryota"/>
</dbReference>
<dbReference type="HOGENOM" id="CLU_024089_0_0_1"/>
<dbReference type="OMA" id="GFAHIRS"/>
<dbReference type="OrthoDB" id="10033229at2759"/>
<dbReference type="PhylomeDB" id="Q1LXR6"/>
<dbReference type="TreeFam" id="TF351270"/>
<dbReference type="PRO" id="PR:Q1LXR6"/>
<dbReference type="Proteomes" id="UP000000437">
    <property type="component" value="Alternate scaffold 22"/>
</dbReference>
<dbReference type="Proteomes" id="UP000000437">
    <property type="component" value="Chromosome 22"/>
</dbReference>
<dbReference type="Bgee" id="ENSDARG00000055787">
    <property type="expression patterns" value="Expressed in testis and 3 other cell types or tissues"/>
</dbReference>
<dbReference type="GO" id="GO:0042995">
    <property type="term" value="C:cell projection"/>
    <property type="evidence" value="ECO:0007669"/>
    <property type="project" value="UniProtKB-KW"/>
</dbReference>
<dbReference type="GO" id="GO:0005813">
    <property type="term" value="C:centrosome"/>
    <property type="evidence" value="ECO:0007669"/>
    <property type="project" value="UniProtKB-SubCell"/>
</dbReference>
<dbReference type="GO" id="GO:0005737">
    <property type="term" value="C:cytoplasm"/>
    <property type="evidence" value="ECO:0007669"/>
    <property type="project" value="UniProtKB-KW"/>
</dbReference>
<dbReference type="GO" id="GO:0008270">
    <property type="term" value="F:zinc ion binding"/>
    <property type="evidence" value="ECO:0007669"/>
    <property type="project" value="UniProtKB-KW"/>
</dbReference>
<dbReference type="GO" id="GO:0042462">
    <property type="term" value="P:eye photoreceptor cell development"/>
    <property type="evidence" value="ECO:0000315"/>
    <property type="project" value="ZFIN"/>
</dbReference>
<dbReference type="GO" id="GO:0032386">
    <property type="term" value="P:regulation of intracellular transport"/>
    <property type="evidence" value="ECO:0000315"/>
    <property type="project" value="UniProtKB"/>
</dbReference>
<dbReference type="Gene3D" id="4.10.1060.50">
    <property type="match status" value="1"/>
</dbReference>
<dbReference type="Gene3D" id="1.25.40.20">
    <property type="entry name" value="Ankyrin repeat-containing domain"/>
    <property type="match status" value="1"/>
</dbReference>
<dbReference type="InterPro" id="IPR002110">
    <property type="entry name" value="Ankyrin_rpt"/>
</dbReference>
<dbReference type="InterPro" id="IPR036770">
    <property type="entry name" value="Ankyrin_rpt-contain_sf"/>
</dbReference>
<dbReference type="InterPro" id="IPR052481">
    <property type="entry name" value="DZAN1"/>
</dbReference>
<dbReference type="InterPro" id="IPR025874">
    <property type="entry name" value="DZR"/>
</dbReference>
<dbReference type="InterPro" id="IPR038587">
    <property type="entry name" value="Ribosomal_eL40_sf"/>
</dbReference>
<dbReference type="PANTHER" id="PTHR16058">
    <property type="entry name" value="DOUBLE ZINC RIBBON AND ANKYRIN REPEAT-CONTAINING PROTEIN 1"/>
    <property type="match status" value="1"/>
</dbReference>
<dbReference type="PANTHER" id="PTHR16058:SF4">
    <property type="entry name" value="DOUBLE ZINC RIBBON AND ANKYRIN REPEAT-CONTAINING PROTEIN 1"/>
    <property type="match status" value="1"/>
</dbReference>
<dbReference type="Pfam" id="PF12796">
    <property type="entry name" value="Ank_2"/>
    <property type="match status" value="1"/>
</dbReference>
<dbReference type="Pfam" id="PF13290">
    <property type="entry name" value="CHB_HEX_C_1"/>
    <property type="match status" value="1"/>
</dbReference>
<dbReference type="Pfam" id="PF12773">
    <property type="entry name" value="DZR"/>
    <property type="match status" value="2"/>
</dbReference>
<dbReference type="SMART" id="SM00248">
    <property type="entry name" value="ANK"/>
    <property type="match status" value="3"/>
</dbReference>
<dbReference type="SUPFAM" id="SSF48403">
    <property type="entry name" value="Ankyrin repeat"/>
    <property type="match status" value="1"/>
</dbReference>
<dbReference type="PROSITE" id="PS50297">
    <property type="entry name" value="ANK_REP_REGION"/>
    <property type="match status" value="1"/>
</dbReference>
<dbReference type="PROSITE" id="PS50088">
    <property type="entry name" value="ANK_REPEAT"/>
    <property type="match status" value="1"/>
</dbReference>
<comment type="function">
    <text evidence="4">Required for the intracellular transport of organelles and vesicles, and is essential for the photoreceptor's outer segments formation, maintenance and function.</text>
</comment>
<comment type="subcellular location">
    <subcellularLocation>
        <location evidence="1">Cytoplasm</location>
        <location evidence="1">Cytoskeleton</location>
        <location evidence="1">Microtubule organizing center</location>
        <location evidence="1">Centrosome</location>
    </subcellularLocation>
    <subcellularLocation>
        <location evidence="1">Cytoplasm</location>
        <location evidence="1">Cytoskeleton</location>
        <location evidence="1">Cilium basal body</location>
    </subcellularLocation>
</comment>
<comment type="disruption phenotype">
    <text evidence="4">Morpholino knockdown of the protein results in small eyes and severe pericardial edema at 4 dpf. In addition, dzank1 morphants show impaired ambulatory activity. Morphants display dysmorphic photoreceptor outer segment (OS). Retrograde melanosome transport is severely impaired in dzank1 morphants.</text>
</comment>
<feature type="chain" id="PRO_0000459055" description="Double zinc ribbon and ankyrin repeat-containing protein 1">
    <location>
        <begin position="1"/>
        <end position="752"/>
    </location>
</feature>
<feature type="repeat" description="ANK 1" evidence="2">
    <location>
        <begin position="638"/>
        <end position="667"/>
    </location>
</feature>
<feature type="repeat" description="ANK 2" evidence="2">
    <location>
        <begin position="672"/>
        <end position="703"/>
    </location>
</feature>
<feature type="repeat" description="ANK 3" evidence="2">
    <location>
        <begin position="707"/>
        <end position="737"/>
    </location>
</feature>
<feature type="zinc finger region" description="DZANK-type 1" evidence="2">
    <location>
        <begin position="210"/>
        <end position="270"/>
    </location>
</feature>
<feature type="zinc finger region" description="DZANK-type 2" evidence="2">
    <location>
        <begin position="338"/>
        <end position="386"/>
    </location>
</feature>
<feature type="region of interest" description="Disordered" evidence="3">
    <location>
        <begin position="448"/>
        <end position="471"/>
    </location>
</feature>
<feature type="region of interest" description="Disordered" evidence="3">
    <location>
        <begin position="536"/>
        <end position="614"/>
    </location>
</feature>
<feature type="compositionally biased region" description="Basic and acidic residues" evidence="3">
    <location>
        <begin position="448"/>
        <end position="469"/>
    </location>
</feature>
<feature type="compositionally biased region" description="Low complexity" evidence="3">
    <location>
        <begin position="536"/>
        <end position="554"/>
    </location>
</feature>
<feature type="compositionally biased region" description="Polar residues" evidence="3">
    <location>
        <begin position="555"/>
        <end position="580"/>
    </location>
</feature>
<feature type="compositionally biased region" description="Basic and acidic residues" evidence="3">
    <location>
        <begin position="600"/>
        <end position="614"/>
    </location>
</feature>
<proteinExistence type="evidence at transcript level"/>